<name>CENPW_HUMAN</name>
<feature type="chain" id="PRO_0000311183" description="Centromere protein W">
    <location>
        <begin position="1"/>
        <end position="88"/>
    </location>
</feature>
<feature type="splice variant" id="VSP_055708" description="In isoform 2." evidence="10">
    <original>V</original>
    <variation>VRFHPFSGWEWGTGEV</variation>
    <location>
        <position position="43"/>
    </location>
</feature>
<feature type="helix" evidence="11">
    <location>
        <begin position="19"/>
        <end position="29"/>
    </location>
</feature>
<feature type="helix" evidence="11">
    <location>
        <begin position="39"/>
        <end position="64"/>
    </location>
</feature>
<feature type="strand" evidence="11">
    <location>
        <begin position="68"/>
        <end position="70"/>
    </location>
</feature>
<feature type="helix" evidence="11">
    <location>
        <begin position="72"/>
        <end position="86"/>
    </location>
</feature>
<gene>
    <name type="primary">CENPW</name>
    <name type="synonym">C6orf173</name>
    <name type="synonym">CUG2</name>
</gene>
<protein>
    <recommendedName>
        <fullName>Centromere protein W</fullName>
        <shortName>CENP-W</shortName>
    </recommendedName>
    <alternativeName>
        <fullName>Cancer-up-regulated gene 2 protein</fullName>
    </alternativeName>
</protein>
<accession>Q5EE01</accession>
<accession>A6NIR0</accession>
<accession>A6NJC2</accession>
<dbReference type="EMBL" id="AY902475">
    <property type="protein sequence ID" value="AAW82474.1"/>
    <property type="molecule type" value="mRNA"/>
</dbReference>
<dbReference type="EMBL" id="AC020559">
    <property type="status" value="NOT_ANNOTATED_CDS"/>
    <property type="molecule type" value="Genomic_DNA"/>
</dbReference>
<dbReference type="EMBL" id="CH471051">
    <property type="protein sequence ID" value="EAW48121.1"/>
    <property type="molecule type" value="Genomic_DNA"/>
</dbReference>
<dbReference type="EMBL" id="CH471051">
    <property type="protein sequence ID" value="EAW48122.1"/>
    <property type="status" value="ALT_SEQ"/>
    <property type="molecule type" value="Genomic_DNA"/>
</dbReference>
<dbReference type="EMBL" id="CH471051">
    <property type="protein sequence ID" value="EAW48123.1"/>
    <property type="status" value="ALT_SEQ"/>
    <property type="molecule type" value="Genomic_DNA"/>
</dbReference>
<dbReference type="EMBL" id="BC017928">
    <property type="protein sequence ID" value="AAH17928.1"/>
    <property type="molecule type" value="mRNA"/>
</dbReference>
<dbReference type="EMBL" id="BC039556">
    <property type="protein sequence ID" value="AAH39556.1"/>
    <property type="molecule type" value="mRNA"/>
</dbReference>
<dbReference type="EMBL" id="BC046178">
    <property type="protein sequence ID" value="AAH46178.1"/>
    <property type="molecule type" value="mRNA"/>
</dbReference>
<dbReference type="EMBL" id="BC062798">
    <property type="protein sequence ID" value="AAH62798.1"/>
    <property type="molecule type" value="mRNA"/>
</dbReference>
<dbReference type="CCDS" id="CCDS34529.1">
    <molecule id="Q5EE01-1"/>
</dbReference>
<dbReference type="CCDS" id="CCDS69196.1">
    <molecule id="Q5EE01-2"/>
</dbReference>
<dbReference type="RefSeq" id="NP_001012525.1">
    <molecule id="Q5EE01-1"/>
    <property type="nucleotide sequence ID" value="NM_001012507.4"/>
</dbReference>
<dbReference type="RefSeq" id="NP_001273453.1">
    <molecule id="Q5EE01-2"/>
    <property type="nucleotide sequence ID" value="NM_001286524.2"/>
</dbReference>
<dbReference type="RefSeq" id="NP_001273454.1">
    <property type="nucleotide sequence ID" value="NM_001286525.1"/>
</dbReference>
<dbReference type="RefSeq" id="XP_016866334.1">
    <property type="nucleotide sequence ID" value="XM_017010845.1"/>
</dbReference>
<dbReference type="PDB" id="7QOO">
    <property type="method" value="EM"/>
    <property type="resolution" value="4.60 A"/>
    <property type="chains" value="W=1-88"/>
</dbReference>
<dbReference type="PDB" id="7R5S">
    <property type="method" value="EM"/>
    <property type="resolution" value="2.83 A"/>
    <property type="chains" value="W=1-88"/>
</dbReference>
<dbReference type="PDB" id="7XHN">
    <property type="method" value="EM"/>
    <property type="resolution" value="3.71 A"/>
    <property type="chains" value="W=1-88"/>
</dbReference>
<dbReference type="PDB" id="7XHO">
    <property type="method" value="EM"/>
    <property type="resolution" value="3.29 A"/>
    <property type="chains" value="W=1-88"/>
</dbReference>
<dbReference type="PDB" id="7YWX">
    <property type="method" value="EM"/>
    <property type="resolution" value="12.00 A"/>
    <property type="chains" value="W=1-88"/>
</dbReference>
<dbReference type="PDBsum" id="7QOO"/>
<dbReference type="PDBsum" id="7R5S"/>
<dbReference type="PDBsum" id="7XHN"/>
<dbReference type="PDBsum" id="7XHO"/>
<dbReference type="PDBsum" id="7YWX"/>
<dbReference type="EMDB" id="EMD-14098"/>
<dbReference type="EMDB" id="EMD-14336"/>
<dbReference type="EMDB" id="EMD-14351"/>
<dbReference type="EMDB" id="EMD-33196"/>
<dbReference type="EMDB" id="EMD-33197"/>
<dbReference type="SMR" id="Q5EE01"/>
<dbReference type="BioGRID" id="132240">
    <property type="interactions" value="35"/>
</dbReference>
<dbReference type="ComplexPortal" id="CPX-5646">
    <property type="entry name" value="Kinetochore CCAN complex"/>
</dbReference>
<dbReference type="CORUM" id="Q5EE01"/>
<dbReference type="FunCoup" id="Q5EE01">
    <property type="interactions" value="751"/>
</dbReference>
<dbReference type="IntAct" id="Q5EE01">
    <property type="interactions" value="5"/>
</dbReference>
<dbReference type="STRING" id="9606.ENSP00000357308"/>
<dbReference type="iPTMnet" id="Q5EE01"/>
<dbReference type="PhosphoSitePlus" id="Q5EE01"/>
<dbReference type="BioMuta" id="CENPW"/>
<dbReference type="DMDM" id="74741448"/>
<dbReference type="jPOST" id="Q5EE01"/>
<dbReference type="MassIVE" id="Q5EE01"/>
<dbReference type="PeptideAtlas" id="Q5EE01"/>
<dbReference type="ProteomicsDB" id="62772">
    <molecule id="Q5EE01-1"/>
</dbReference>
<dbReference type="Pumba" id="Q5EE01"/>
<dbReference type="TopDownProteomics" id="Q5EE01-1">
    <molecule id="Q5EE01-1"/>
</dbReference>
<dbReference type="Antibodypedia" id="32744">
    <property type="antibodies" value="64 antibodies from 22 providers"/>
</dbReference>
<dbReference type="DNASU" id="387103"/>
<dbReference type="Ensembl" id="ENST00000368325.5">
    <molecule id="Q5EE01-2"/>
    <property type="protein sequence ID" value="ENSP00000357308.1"/>
    <property type="gene ID" value="ENSG00000203760.9"/>
</dbReference>
<dbReference type="Ensembl" id="ENST00000368328.5">
    <molecule id="Q5EE01-1"/>
    <property type="protein sequence ID" value="ENSP00000357311.4"/>
    <property type="gene ID" value="ENSG00000203760.9"/>
</dbReference>
<dbReference type="GeneID" id="387103"/>
<dbReference type="KEGG" id="hsa:387103"/>
<dbReference type="MANE-Select" id="ENST00000368328.5">
    <property type="protein sequence ID" value="ENSP00000357311.4"/>
    <property type="RefSeq nucleotide sequence ID" value="NM_001012507.4"/>
    <property type="RefSeq protein sequence ID" value="NP_001012525.1"/>
</dbReference>
<dbReference type="UCSC" id="uc003qao.5">
    <molecule id="Q5EE01-1"/>
    <property type="organism name" value="human"/>
</dbReference>
<dbReference type="AGR" id="HGNC:21488"/>
<dbReference type="CTD" id="387103"/>
<dbReference type="DisGeNET" id="387103"/>
<dbReference type="GeneCards" id="CENPW"/>
<dbReference type="HGNC" id="HGNC:21488">
    <property type="gene designation" value="CENPW"/>
</dbReference>
<dbReference type="HPA" id="ENSG00000203760">
    <property type="expression patterns" value="Tissue enhanced (bone marrow, testis)"/>
</dbReference>
<dbReference type="MIM" id="611264">
    <property type="type" value="gene"/>
</dbReference>
<dbReference type="neXtProt" id="NX_Q5EE01"/>
<dbReference type="OpenTargets" id="ENSG00000203760"/>
<dbReference type="PharmGKB" id="PA165617841"/>
<dbReference type="VEuPathDB" id="HostDB:ENSG00000203760"/>
<dbReference type="GeneTree" id="ENSGT00390000010369"/>
<dbReference type="HOGENOM" id="CLU_178644_1_0_1"/>
<dbReference type="InParanoid" id="Q5EE01"/>
<dbReference type="OMA" id="IIKKDHV"/>
<dbReference type="OrthoDB" id="2543597at2759"/>
<dbReference type="PAN-GO" id="Q5EE01">
    <property type="GO annotations" value="5 GO annotations based on evolutionary models"/>
</dbReference>
<dbReference type="PhylomeDB" id="Q5EE01"/>
<dbReference type="TreeFam" id="TF343285"/>
<dbReference type="PathwayCommons" id="Q5EE01"/>
<dbReference type="Reactome" id="R-HSA-606279">
    <property type="pathway name" value="Deposition of new CENPA-containing nucleosomes at the centromere"/>
</dbReference>
<dbReference type="SignaLink" id="Q5EE01"/>
<dbReference type="SIGNOR" id="Q5EE01"/>
<dbReference type="BioGRID-ORCS" id="387103">
    <property type="hits" value="812 hits in 1172 CRISPR screens"/>
</dbReference>
<dbReference type="CD-CODE" id="91857CE7">
    <property type="entry name" value="Nucleolus"/>
</dbReference>
<dbReference type="ChiTaRS" id="CENPW">
    <property type="organism name" value="human"/>
</dbReference>
<dbReference type="GenomeRNAi" id="387103"/>
<dbReference type="Pharos" id="Q5EE01">
    <property type="development level" value="Tbio"/>
</dbReference>
<dbReference type="PRO" id="PR:Q5EE01"/>
<dbReference type="Proteomes" id="UP000005640">
    <property type="component" value="Chromosome 6"/>
</dbReference>
<dbReference type="RNAct" id="Q5EE01">
    <property type="molecule type" value="protein"/>
</dbReference>
<dbReference type="Bgee" id="ENSG00000203760">
    <property type="expression patterns" value="Expressed in oocyte and 150 other cell types or tissues"/>
</dbReference>
<dbReference type="ExpressionAtlas" id="Q5EE01">
    <property type="expression patterns" value="baseline and differential"/>
</dbReference>
<dbReference type="GO" id="GO:0000775">
    <property type="term" value="C:chromosome, centromeric region"/>
    <property type="evidence" value="ECO:0000314"/>
    <property type="project" value="UniProtKB"/>
</dbReference>
<dbReference type="GO" id="GO:0000939">
    <property type="term" value="C:inner kinetochore"/>
    <property type="evidence" value="ECO:0000353"/>
    <property type="project" value="ComplexPortal"/>
</dbReference>
<dbReference type="GO" id="GO:0000776">
    <property type="term" value="C:kinetochore"/>
    <property type="evidence" value="ECO:0000314"/>
    <property type="project" value="UniProtKB"/>
</dbReference>
<dbReference type="GO" id="GO:0016363">
    <property type="term" value="C:nuclear matrix"/>
    <property type="evidence" value="ECO:0007669"/>
    <property type="project" value="UniProtKB-SubCell"/>
</dbReference>
<dbReference type="GO" id="GO:0005730">
    <property type="term" value="C:nucleolus"/>
    <property type="evidence" value="ECO:0007669"/>
    <property type="project" value="UniProtKB-SubCell"/>
</dbReference>
<dbReference type="GO" id="GO:0005654">
    <property type="term" value="C:nucleoplasm"/>
    <property type="evidence" value="ECO:0000314"/>
    <property type="project" value="HPA"/>
</dbReference>
<dbReference type="GO" id="GO:0005634">
    <property type="term" value="C:nucleus"/>
    <property type="evidence" value="ECO:0000303"/>
    <property type="project" value="ComplexPortal"/>
</dbReference>
<dbReference type="GO" id="GO:0003677">
    <property type="term" value="F:DNA binding"/>
    <property type="evidence" value="ECO:0007669"/>
    <property type="project" value="UniProtKB-KW"/>
</dbReference>
<dbReference type="GO" id="GO:0046982">
    <property type="term" value="F:protein heterodimerization activity"/>
    <property type="evidence" value="ECO:0007669"/>
    <property type="project" value="InterPro"/>
</dbReference>
<dbReference type="GO" id="GO:0051301">
    <property type="term" value="P:cell division"/>
    <property type="evidence" value="ECO:0007669"/>
    <property type="project" value="UniProtKB-KW"/>
</dbReference>
<dbReference type="GO" id="GO:0034080">
    <property type="term" value="P:CENP-A containing chromatin assembly"/>
    <property type="evidence" value="ECO:0000304"/>
    <property type="project" value="UniProtKB"/>
</dbReference>
<dbReference type="GO" id="GO:0051276">
    <property type="term" value="P:chromosome organization"/>
    <property type="evidence" value="ECO:0000315"/>
    <property type="project" value="UniProtKB"/>
</dbReference>
<dbReference type="GO" id="GO:0007059">
    <property type="term" value="P:chromosome segregation"/>
    <property type="evidence" value="ECO:0000315"/>
    <property type="project" value="UniProtKB"/>
</dbReference>
<dbReference type="GO" id="GO:0051382">
    <property type="term" value="P:kinetochore assembly"/>
    <property type="evidence" value="ECO:0000315"/>
    <property type="project" value="UniProtKB"/>
</dbReference>
<dbReference type="GO" id="GO:0000278">
    <property type="term" value="P:mitotic cell cycle"/>
    <property type="evidence" value="ECO:0000315"/>
    <property type="project" value="UniProtKB"/>
</dbReference>
<dbReference type="CDD" id="cd13732">
    <property type="entry name" value="HFD_CENP-W"/>
    <property type="match status" value="1"/>
</dbReference>
<dbReference type="FunFam" id="1.10.20.10:FF:000053">
    <property type="entry name" value="Centromere protein W"/>
    <property type="match status" value="1"/>
</dbReference>
<dbReference type="Gene3D" id="1.10.20.10">
    <property type="entry name" value="Histone, subunit A"/>
    <property type="match status" value="1"/>
</dbReference>
<dbReference type="InterPro" id="IPR028847">
    <property type="entry name" value="CENP-W"/>
</dbReference>
<dbReference type="InterPro" id="IPR052484">
    <property type="entry name" value="CENP-W/WIP1"/>
</dbReference>
<dbReference type="InterPro" id="IPR009072">
    <property type="entry name" value="Histone-fold"/>
</dbReference>
<dbReference type="PANTHER" id="PTHR34832">
    <property type="entry name" value="CENTROMERE PROTEIN W"/>
    <property type="match status" value="1"/>
</dbReference>
<dbReference type="PANTHER" id="PTHR34832:SF1">
    <property type="entry name" value="CENTROMERE PROTEIN W"/>
    <property type="match status" value="1"/>
</dbReference>
<dbReference type="Pfam" id="PF15510">
    <property type="entry name" value="CENP-W"/>
    <property type="match status" value="1"/>
</dbReference>
<dbReference type="SUPFAM" id="SSF47113">
    <property type="entry name" value="Histone-fold"/>
    <property type="match status" value="1"/>
</dbReference>
<proteinExistence type="evidence at protein level"/>
<comment type="function">
    <text evidence="1 5 6 7 8 9">Component of the CENPA-NAC (nucleosome-associated) complex, a complex that plays a central role in assembly of kinetochore proteins, mitotic progression and chromosome segregation (By similarity). The CENPA-NAC complex recruits the CENPA-CAD (nucleosome distal) complex and may be involved in incorporation of newly synthesized CENPA into centromeres (By similarity). Part of a nucleosome-associated complex that binds specifically to histone H3-containing nucleosomes at the centromere, as opposed to nucleosomes containing CENPA. Component of the heterotetrameric CENP-T-W-S-X complex that binds and supercoils DNA, and plays an important role in kinetochore assembly. CENPW has a fundamental role in kinetochore assembly and function. It is one of the inner kinetochore proteins, with most further proteins binding downstream. Required for normal chromosome organization and normal progress through mitosis.</text>
</comment>
<comment type="subunit">
    <text evidence="5 6 7 8 9">Heterodimer with CENPT; this dimer coassembles with CENPS-CENPX heterodimers at centromeres to form the tetrameric CENP-T-W-S-X complex, which is a subcomplex of the large constitutive centromere-associated network (CCAN, also known as the interphase centromere complex or ICEN) (PubMed:19070575, PubMed:19533040, PubMed:21695110, PubMed:22304917). Interacts with NPM1 (PubMed:22002061).</text>
</comment>
<comment type="interaction">
    <interactant intactId="EBI-5529625">
        <id>Q5EE01</id>
    </interactant>
    <interactant intactId="EBI-719918">
        <id>Q96BT3</id>
        <label>CENPT</label>
    </interactant>
    <organismsDiffer>false</organismsDiffer>
    <experiments>7</experiments>
</comment>
<comment type="subcellular location">
    <subcellularLocation>
        <location evidence="4">Nucleus</location>
    </subcellularLocation>
    <subcellularLocation>
        <location evidence="5 6 9">Chromosome</location>
        <location evidence="5 6 9">Centromere</location>
    </subcellularLocation>
    <subcellularLocation>
        <location evidence="5 9">Chromosome</location>
        <location evidence="5 9">Centromere</location>
        <location evidence="5 9">Kinetochore</location>
    </subcellularLocation>
    <subcellularLocation>
        <location evidence="8">Nucleus matrix</location>
    </subcellularLocation>
    <subcellularLocation>
        <location evidence="8">Nucleus</location>
        <location evidence="8">Nucleolus</location>
    </subcellularLocation>
    <text evidence="2">Constitutively localizes to centromeres throughout the cell cycle, and to the inner kinetochore during mitosis.</text>
</comment>
<comment type="alternative products">
    <event type="alternative splicing"/>
    <isoform>
        <id>Q5EE01-1</id>
        <name>1</name>
        <sequence type="displayed"/>
    </isoform>
    <isoform>
        <id>Q5EE01-2</id>
        <name>2</name>
        <sequence type="described" ref="VSP_055708"/>
    </isoform>
</comment>
<comment type="tissue specificity">
    <text evidence="3 4">Highly expressed in ovary, liver, lung and pancreas and to a lower extent in breast and gastrointestinal tract cancers; such as those of the colon, rectum and stomach. Overexpressed in high grade breast invasive tumors. Expressed in many cancer cell types.</text>
</comment>
<comment type="similarity">
    <text evidence="10">Belongs to the CENP-W/WIP1 family.</text>
</comment>
<comment type="sequence caution" evidence="10">
    <conflict type="erroneous gene model prediction">
        <sequence resource="EMBL-CDS" id="EAW48122"/>
    </conflict>
</comment>
<comment type="sequence caution" evidence="10">
    <conflict type="erroneous gene model prediction">
        <sequence resource="EMBL-CDS" id="EAW48123"/>
    </conflict>
</comment>
<sequence length="88" mass="10061">MALSTIVSQRKQIKRKAPRGFLKRVFKRKKPQLRLEKSGDLLVHLNCLLFVHRLAEESRTNACASKCRVINKEHVLAAAKVILKKSRG</sequence>
<organism>
    <name type="scientific">Homo sapiens</name>
    <name type="common">Human</name>
    <dbReference type="NCBI Taxonomy" id="9606"/>
    <lineage>
        <taxon>Eukaryota</taxon>
        <taxon>Metazoa</taxon>
        <taxon>Chordata</taxon>
        <taxon>Craniata</taxon>
        <taxon>Vertebrata</taxon>
        <taxon>Euteleostomi</taxon>
        <taxon>Mammalia</taxon>
        <taxon>Eutheria</taxon>
        <taxon>Euarchontoglires</taxon>
        <taxon>Primates</taxon>
        <taxon>Haplorrhini</taxon>
        <taxon>Catarrhini</taxon>
        <taxon>Hominidae</taxon>
        <taxon>Homo</taxon>
    </lineage>
</organism>
<reference key="1">
    <citation type="journal article" date="2007" name="Biochem. Biophys. Res. Commun.">
        <title>Molecular cloning and functional analysis of a novel oncogene, cancer-upregulated gene 2 (CUG2).</title>
        <authorList>
            <person name="Lee S."/>
            <person name="Gang J."/>
            <person name="Jeon S.B."/>
            <person name="Choo S.H."/>
            <person name="Lee B."/>
            <person name="Kim Y.-G."/>
            <person name="Lee Y.S."/>
            <person name="Jung J."/>
            <person name="Song S.Y."/>
            <person name="Koh S.S."/>
        </authorList>
    </citation>
    <scope>NUCLEOTIDE SEQUENCE [MRNA]</scope>
    <scope>TISSUE SPECIFICITY</scope>
    <scope>SUBCELLULAR LOCATION</scope>
    <source>
        <tissue>Stomach</tissue>
    </source>
</reference>
<reference key="2">
    <citation type="journal article" date="2003" name="Nature">
        <title>The DNA sequence and analysis of human chromosome 6.</title>
        <authorList>
            <person name="Mungall A.J."/>
            <person name="Palmer S.A."/>
            <person name="Sims S.K."/>
            <person name="Edwards C.A."/>
            <person name="Ashurst J.L."/>
            <person name="Wilming L."/>
            <person name="Jones M.C."/>
            <person name="Horton R."/>
            <person name="Hunt S.E."/>
            <person name="Scott C.E."/>
            <person name="Gilbert J.G.R."/>
            <person name="Clamp M.E."/>
            <person name="Bethel G."/>
            <person name="Milne S."/>
            <person name="Ainscough R."/>
            <person name="Almeida J.P."/>
            <person name="Ambrose K.D."/>
            <person name="Andrews T.D."/>
            <person name="Ashwell R.I.S."/>
            <person name="Babbage A.K."/>
            <person name="Bagguley C.L."/>
            <person name="Bailey J."/>
            <person name="Banerjee R."/>
            <person name="Barker D.J."/>
            <person name="Barlow K.F."/>
            <person name="Bates K."/>
            <person name="Beare D.M."/>
            <person name="Beasley H."/>
            <person name="Beasley O."/>
            <person name="Bird C.P."/>
            <person name="Blakey S.E."/>
            <person name="Bray-Allen S."/>
            <person name="Brook J."/>
            <person name="Brown A.J."/>
            <person name="Brown J.Y."/>
            <person name="Burford D.C."/>
            <person name="Burrill W."/>
            <person name="Burton J."/>
            <person name="Carder C."/>
            <person name="Carter N.P."/>
            <person name="Chapman J.C."/>
            <person name="Clark S.Y."/>
            <person name="Clark G."/>
            <person name="Clee C.M."/>
            <person name="Clegg S."/>
            <person name="Cobley V."/>
            <person name="Collier R.E."/>
            <person name="Collins J.E."/>
            <person name="Colman L.K."/>
            <person name="Corby N.R."/>
            <person name="Coville G.J."/>
            <person name="Culley K.M."/>
            <person name="Dhami P."/>
            <person name="Davies J."/>
            <person name="Dunn M."/>
            <person name="Earthrowl M.E."/>
            <person name="Ellington A.E."/>
            <person name="Evans K.A."/>
            <person name="Faulkner L."/>
            <person name="Francis M.D."/>
            <person name="Frankish A."/>
            <person name="Frankland J."/>
            <person name="French L."/>
            <person name="Garner P."/>
            <person name="Garnett J."/>
            <person name="Ghori M.J."/>
            <person name="Gilby L.M."/>
            <person name="Gillson C.J."/>
            <person name="Glithero R.J."/>
            <person name="Grafham D.V."/>
            <person name="Grant M."/>
            <person name="Gribble S."/>
            <person name="Griffiths C."/>
            <person name="Griffiths M.N.D."/>
            <person name="Hall R."/>
            <person name="Halls K.S."/>
            <person name="Hammond S."/>
            <person name="Harley J.L."/>
            <person name="Hart E.A."/>
            <person name="Heath P.D."/>
            <person name="Heathcott R."/>
            <person name="Holmes S.J."/>
            <person name="Howden P.J."/>
            <person name="Howe K.L."/>
            <person name="Howell G.R."/>
            <person name="Huckle E."/>
            <person name="Humphray S.J."/>
            <person name="Humphries M.D."/>
            <person name="Hunt A.R."/>
            <person name="Johnson C.M."/>
            <person name="Joy A.A."/>
            <person name="Kay M."/>
            <person name="Keenan S.J."/>
            <person name="Kimberley A.M."/>
            <person name="King A."/>
            <person name="Laird G.K."/>
            <person name="Langford C."/>
            <person name="Lawlor S."/>
            <person name="Leongamornlert D.A."/>
            <person name="Leversha M."/>
            <person name="Lloyd C.R."/>
            <person name="Lloyd D.M."/>
            <person name="Loveland J.E."/>
            <person name="Lovell J."/>
            <person name="Martin S."/>
            <person name="Mashreghi-Mohammadi M."/>
            <person name="Maslen G.L."/>
            <person name="Matthews L."/>
            <person name="McCann O.T."/>
            <person name="McLaren S.J."/>
            <person name="McLay K."/>
            <person name="McMurray A."/>
            <person name="Moore M.J.F."/>
            <person name="Mullikin J.C."/>
            <person name="Niblett D."/>
            <person name="Nickerson T."/>
            <person name="Novik K.L."/>
            <person name="Oliver K."/>
            <person name="Overton-Larty E.K."/>
            <person name="Parker A."/>
            <person name="Patel R."/>
            <person name="Pearce A.V."/>
            <person name="Peck A.I."/>
            <person name="Phillimore B.J.C.T."/>
            <person name="Phillips S."/>
            <person name="Plumb R.W."/>
            <person name="Porter K.M."/>
            <person name="Ramsey Y."/>
            <person name="Ranby S.A."/>
            <person name="Rice C.M."/>
            <person name="Ross M.T."/>
            <person name="Searle S.M."/>
            <person name="Sehra H.K."/>
            <person name="Sheridan E."/>
            <person name="Skuce C.D."/>
            <person name="Smith S."/>
            <person name="Smith M."/>
            <person name="Spraggon L."/>
            <person name="Squares S.L."/>
            <person name="Steward C.A."/>
            <person name="Sycamore N."/>
            <person name="Tamlyn-Hall G."/>
            <person name="Tester J."/>
            <person name="Theaker A.J."/>
            <person name="Thomas D.W."/>
            <person name="Thorpe A."/>
            <person name="Tracey A."/>
            <person name="Tromans A."/>
            <person name="Tubby B."/>
            <person name="Wall M."/>
            <person name="Wallis J.M."/>
            <person name="West A.P."/>
            <person name="White S.S."/>
            <person name="Whitehead S.L."/>
            <person name="Whittaker H."/>
            <person name="Wild A."/>
            <person name="Willey D.J."/>
            <person name="Wilmer T.E."/>
            <person name="Wood J.M."/>
            <person name="Wray P.W."/>
            <person name="Wyatt J.C."/>
            <person name="Young L."/>
            <person name="Younger R.M."/>
            <person name="Bentley D.R."/>
            <person name="Coulson A."/>
            <person name="Durbin R.M."/>
            <person name="Hubbard T."/>
            <person name="Sulston J.E."/>
            <person name="Dunham I."/>
            <person name="Rogers J."/>
            <person name="Beck S."/>
        </authorList>
    </citation>
    <scope>NUCLEOTIDE SEQUENCE [LARGE SCALE GENOMIC DNA]</scope>
</reference>
<reference key="3">
    <citation type="submission" date="2005-09" db="EMBL/GenBank/DDBJ databases">
        <authorList>
            <person name="Mural R.J."/>
            <person name="Istrail S."/>
            <person name="Sutton G.G."/>
            <person name="Florea L."/>
            <person name="Halpern A.L."/>
            <person name="Mobarry C.M."/>
            <person name="Lippert R."/>
            <person name="Walenz B."/>
            <person name="Shatkay H."/>
            <person name="Dew I."/>
            <person name="Miller J.R."/>
            <person name="Flanigan M.J."/>
            <person name="Edwards N.J."/>
            <person name="Bolanos R."/>
            <person name="Fasulo D."/>
            <person name="Halldorsson B.V."/>
            <person name="Hannenhalli S."/>
            <person name="Turner R."/>
            <person name="Yooseph S."/>
            <person name="Lu F."/>
            <person name="Nusskern D.R."/>
            <person name="Shue B.C."/>
            <person name="Zheng X.H."/>
            <person name="Zhong F."/>
            <person name="Delcher A.L."/>
            <person name="Huson D.H."/>
            <person name="Kravitz S.A."/>
            <person name="Mouchard L."/>
            <person name="Reinert K."/>
            <person name="Remington K.A."/>
            <person name="Clark A.G."/>
            <person name="Waterman M.S."/>
            <person name="Eichler E.E."/>
            <person name="Adams M.D."/>
            <person name="Hunkapiller M.W."/>
            <person name="Myers E.W."/>
            <person name="Venter J.C."/>
        </authorList>
    </citation>
    <scope>NUCLEOTIDE SEQUENCE [LARGE SCALE GENOMIC DNA]</scope>
</reference>
<reference key="4">
    <citation type="journal article" date="2004" name="Genome Res.">
        <title>The status, quality, and expansion of the NIH full-length cDNA project: the Mammalian Gene Collection (MGC).</title>
        <authorList>
            <consortium name="The MGC Project Team"/>
        </authorList>
    </citation>
    <scope>NUCLEOTIDE SEQUENCE [LARGE SCALE MRNA]</scope>
    <source>
        <tissue>Kidney</tissue>
        <tissue>Lung</tissue>
    </source>
</reference>
<reference key="5">
    <citation type="journal article" date="2006" name="Cancer Res.">
        <title>Genetic reclassification of histologic grade delineates new clinical subtypes of breast cancer.</title>
        <authorList>
            <person name="Ivshina A.V."/>
            <person name="George J."/>
            <person name="Senko O."/>
            <person name="Mow B."/>
            <person name="Putti T.C."/>
            <person name="Smeds J."/>
            <person name="Lindahl T."/>
            <person name="Pawitan Y."/>
            <person name="Hall P."/>
            <person name="Nordgren H."/>
            <person name="Wong J.E."/>
            <person name="Liu E.T."/>
            <person name="Bergh J."/>
            <person name="Kuznetsov V.A."/>
            <person name="Miller L.D."/>
        </authorList>
    </citation>
    <scope>TISSUE SPECIFICITY</scope>
</reference>
<reference key="6">
    <citation type="journal article" date="2008" name="Cell">
        <title>CCAN makes multiple contacts with centromeric DNA to provide distinct pathways to the outer kinetochore.</title>
        <authorList>
            <person name="Hori T."/>
            <person name="Amano M."/>
            <person name="Suzuki A."/>
            <person name="Backer C.B."/>
            <person name="Welburn J.P."/>
            <person name="Dong Y."/>
            <person name="McEwen B.F."/>
            <person name="Shang W.-H."/>
            <person name="Suzuki E."/>
            <person name="Okawa K."/>
            <person name="Cheeseman I.M."/>
            <person name="Fukagawa T."/>
        </authorList>
    </citation>
    <scope>SUBCELLULAR LOCATION</scope>
    <scope>FUNCTION</scope>
    <scope>INTERACTION WITH CENPT</scope>
</reference>
<reference key="7">
    <citation type="journal article" date="2009" name="Mol. Cells">
        <title>Cancer-upregulated gene 2 (CUG2), a new component of centromere complex, is required for kinetochore function.</title>
        <authorList>
            <person name="Kim H."/>
            <person name="Lee M."/>
            <person name="Lee S."/>
            <person name="Park B."/>
            <person name="Koh W."/>
            <person name="Lee D.J."/>
            <person name="Lim D.S."/>
            <person name="Lee S."/>
        </authorList>
    </citation>
    <scope>FUNCTION</scope>
    <scope>INTERACTION WITH CENPT</scope>
    <scope>SUBCELLULAR LOCATION</scope>
</reference>
<reference key="8">
    <citation type="journal article" date="2011" name="J. Biol. Chem.">
        <title>New centromeric component CENP-W is an RNA-associated nuclear matrix protein that interacts with nucleophosmin/B23 protein.</title>
        <authorList>
            <person name="Chun Y."/>
            <person name="Park B."/>
            <person name="Koh W."/>
            <person name="Lee S."/>
            <person name="Cheon Y."/>
            <person name="Kim R."/>
            <person name="Che L."/>
            <person name="Lee S."/>
        </authorList>
    </citation>
    <scope>FUNCTION</scope>
    <scope>SUBCELLULAR LOCATION</scope>
    <scope>INTERACTION WITH NPM1</scope>
</reference>
<reference key="9">
    <citation type="journal article" date="2011" name="PLoS Biol.">
        <title>Premitotic assembly of human CENPs -T and -W switches centromeric chromatin to a mitotic state.</title>
        <authorList>
            <person name="Prendergast L."/>
            <person name="van Vuuren C."/>
            <person name="Kaczmarczyk A."/>
            <person name="Doering V."/>
            <person name="Hellwig D."/>
            <person name="Quinn N."/>
            <person name="Hoischen C."/>
            <person name="Diekmann S."/>
            <person name="Sullivan K.F."/>
        </authorList>
    </citation>
    <scope>FUNCTION</scope>
    <scope>IDENTIFICATION IN A COMPLEX WITH HISTONE H3</scope>
    <scope>INTERACTION WITH CENPT</scope>
    <scope>SUBCELLULAR LOCATION</scope>
</reference>
<reference key="10">
    <citation type="journal article" date="2012" name="Cell">
        <title>CENP-T-W-S-X forms a unique centromeric chromatin structure with a histone-like fold.</title>
        <authorList>
            <person name="Nishino T."/>
            <person name="Takeuchi K."/>
            <person name="Gascoigne K.E."/>
            <person name="Suzuki A."/>
            <person name="Hori T."/>
            <person name="Oyama T."/>
            <person name="Morikawa K."/>
            <person name="Cheeseman I.M."/>
            <person name="Fukagawa T."/>
        </authorList>
    </citation>
    <scope>FUNCTION</scope>
    <scope>INTERACTION WITH CENPS; CENPT AND CEPNX</scope>
    <scope>SUBCELLULAR LOCATION</scope>
</reference>
<keyword id="KW-0002">3D-structure</keyword>
<keyword id="KW-0025">Alternative splicing</keyword>
<keyword id="KW-0131">Cell cycle</keyword>
<keyword id="KW-0132">Cell division</keyword>
<keyword id="KW-0137">Centromere</keyword>
<keyword id="KW-0158">Chromosome</keyword>
<keyword id="KW-0238">DNA-binding</keyword>
<keyword id="KW-0995">Kinetochore</keyword>
<keyword id="KW-0498">Mitosis</keyword>
<keyword id="KW-0539">Nucleus</keyword>
<keyword id="KW-1267">Proteomics identification</keyword>
<keyword id="KW-1185">Reference proteome</keyword>
<evidence type="ECO:0000250" key="1"/>
<evidence type="ECO:0000250" key="2">
    <source>
        <dbReference type="UniProtKB" id="P0DJH6"/>
    </source>
</evidence>
<evidence type="ECO:0000269" key="3">
    <source>
    </source>
</evidence>
<evidence type="ECO:0000269" key="4">
    <source>
    </source>
</evidence>
<evidence type="ECO:0000269" key="5">
    <source>
    </source>
</evidence>
<evidence type="ECO:0000269" key="6">
    <source>
    </source>
</evidence>
<evidence type="ECO:0000269" key="7">
    <source>
    </source>
</evidence>
<evidence type="ECO:0000269" key="8">
    <source>
    </source>
</evidence>
<evidence type="ECO:0000269" key="9">
    <source>
    </source>
</evidence>
<evidence type="ECO:0000305" key="10"/>
<evidence type="ECO:0007829" key="11">
    <source>
        <dbReference type="PDB" id="7R5S"/>
    </source>
</evidence>